<reference key="1">
    <citation type="submission" date="2006-09" db="EMBL/GenBank/DDBJ databases">
        <title>Complete sequence of Rhodopseudomonas palustris BisA53.</title>
        <authorList>
            <consortium name="US DOE Joint Genome Institute"/>
            <person name="Copeland A."/>
            <person name="Lucas S."/>
            <person name="Lapidus A."/>
            <person name="Barry K."/>
            <person name="Detter J.C."/>
            <person name="Glavina del Rio T."/>
            <person name="Hammon N."/>
            <person name="Israni S."/>
            <person name="Dalin E."/>
            <person name="Tice H."/>
            <person name="Pitluck S."/>
            <person name="Chain P."/>
            <person name="Malfatti S."/>
            <person name="Shin M."/>
            <person name="Vergez L."/>
            <person name="Schmutz J."/>
            <person name="Larimer F."/>
            <person name="Land M."/>
            <person name="Hauser L."/>
            <person name="Pelletier D.A."/>
            <person name="Kyrpides N."/>
            <person name="Kim E."/>
            <person name="Harwood C.S."/>
            <person name="Oda Y."/>
            <person name="Richardson P."/>
        </authorList>
    </citation>
    <scope>NUCLEOTIDE SEQUENCE [LARGE SCALE GENOMIC DNA]</scope>
    <source>
        <strain>BisA53</strain>
    </source>
</reference>
<accession>Q07UV4</accession>
<evidence type="ECO:0000255" key="1">
    <source>
        <dbReference type="HAMAP-Rule" id="MF_00197"/>
    </source>
</evidence>
<gene>
    <name evidence="1" type="primary">dapF</name>
    <name type="ordered locus">RPE_0321</name>
</gene>
<name>DAPF_RHOP5</name>
<feature type="chain" id="PRO_1000011947" description="Diaminopimelate epimerase">
    <location>
        <begin position="1"/>
        <end position="288"/>
    </location>
</feature>
<feature type="active site" description="Proton donor" evidence="1">
    <location>
        <position position="76"/>
    </location>
</feature>
<feature type="active site" description="Proton acceptor" evidence="1">
    <location>
        <position position="224"/>
    </location>
</feature>
<feature type="binding site" evidence="1">
    <location>
        <position position="17"/>
    </location>
    <ligand>
        <name>substrate</name>
    </ligand>
</feature>
<feature type="binding site" evidence="1">
    <location>
        <position position="47"/>
    </location>
    <ligand>
        <name>substrate</name>
    </ligand>
</feature>
<feature type="binding site" evidence="1">
    <location>
        <position position="67"/>
    </location>
    <ligand>
        <name>substrate</name>
    </ligand>
</feature>
<feature type="binding site" evidence="1">
    <location>
        <begin position="77"/>
        <end position="78"/>
    </location>
    <ligand>
        <name>substrate</name>
    </ligand>
</feature>
<feature type="binding site" evidence="1">
    <location>
        <position position="164"/>
    </location>
    <ligand>
        <name>substrate</name>
    </ligand>
</feature>
<feature type="binding site" evidence="1">
    <location>
        <position position="197"/>
    </location>
    <ligand>
        <name>substrate</name>
    </ligand>
</feature>
<feature type="binding site" evidence="1">
    <location>
        <begin position="215"/>
        <end position="216"/>
    </location>
    <ligand>
        <name>substrate</name>
    </ligand>
</feature>
<feature type="binding site" evidence="1">
    <location>
        <begin position="225"/>
        <end position="226"/>
    </location>
    <ligand>
        <name>substrate</name>
    </ligand>
</feature>
<feature type="site" description="Could be important to modulate the pK values of the two catalytic cysteine residues" evidence="1">
    <location>
        <position position="166"/>
    </location>
</feature>
<feature type="site" description="Could be important to modulate the pK values of the two catalytic cysteine residues" evidence="1">
    <location>
        <position position="215"/>
    </location>
</feature>
<proteinExistence type="inferred from homology"/>
<comment type="function">
    <text evidence="1">Catalyzes the stereoinversion of LL-2,6-diaminopimelate (L,L-DAP) to meso-diaminopimelate (meso-DAP), a precursor of L-lysine and an essential component of the bacterial peptidoglycan.</text>
</comment>
<comment type="catalytic activity">
    <reaction evidence="1">
        <text>(2S,6S)-2,6-diaminopimelate = meso-2,6-diaminopimelate</text>
        <dbReference type="Rhea" id="RHEA:15393"/>
        <dbReference type="ChEBI" id="CHEBI:57609"/>
        <dbReference type="ChEBI" id="CHEBI:57791"/>
        <dbReference type="EC" id="5.1.1.7"/>
    </reaction>
</comment>
<comment type="pathway">
    <text evidence="1">Amino-acid biosynthesis; L-lysine biosynthesis via DAP pathway; DL-2,6-diaminopimelate from LL-2,6-diaminopimelate: step 1/1.</text>
</comment>
<comment type="subunit">
    <text evidence="1">Homodimer.</text>
</comment>
<comment type="subcellular location">
    <subcellularLocation>
        <location evidence="1">Cytoplasm</location>
    </subcellularLocation>
</comment>
<comment type="similarity">
    <text evidence="1">Belongs to the diaminopimelate epimerase family.</text>
</comment>
<sequence length="288" mass="30945">MCTLANRSFAKMNGIGNEIVVLDLRDDPVAVTAAAARAIASQVPYDQLMVLQPPRAAGTAAFIRIYNNDGSESNACGNGMRCVAKQVFSGTDASALAFESRAGLLQCWRGAAPDIYTVDMGVPKFGWQDIPLAEEFRDTRMIELQIGPIDAPLLHTPSAVSMGNPHAIFWVDDVHAHDLGRFGPLLENHPIFPERANITLAHIVDRTHIVIRTWERGVGLTKACGSAACATAVAAVRLKRAERQVQISLPGGDLTIDWREADDHVLMTGGASFEFEGTLDPALFAGAA</sequence>
<dbReference type="EC" id="5.1.1.7" evidence="1"/>
<dbReference type="EMBL" id="CP000463">
    <property type="protein sequence ID" value="ABJ04280.1"/>
    <property type="molecule type" value="Genomic_DNA"/>
</dbReference>
<dbReference type="SMR" id="Q07UV4"/>
<dbReference type="STRING" id="316055.RPE_0321"/>
<dbReference type="KEGG" id="rpe:RPE_0321"/>
<dbReference type="eggNOG" id="COG0253">
    <property type="taxonomic scope" value="Bacteria"/>
</dbReference>
<dbReference type="HOGENOM" id="CLU_053306_1_0_5"/>
<dbReference type="OrthoDB" id="9805408at2"/>
<dbReference type="UniPathway" id="UPA00034">
    <property type="reaction ID" value="UER00025"/>
</dbReference>
<dbReference type="GO" id="GO:0005829">
    <property type="term" value="C:cytosol"/>
    <property type="evidence" value="ECO:0007669"/>
    <property type="project" value="TreeGrafter"/>
</dbReference>
<dbReference type="GO" id="GO:0008837">
    <property type="term" value="F:diaminopimelate epimerase activity"/>
    <property type="evidence" value="ECO:0007669"/>
    <property type="project" value="UniProtKB-UniRule"/>
</dbReference>
<dbReference type="GO" id="GO:0009089">
    <property type="term" value="P:lysine biosynthetic process via diaminopimelate"/>
    <property type="evidence" value="ECO:0007669"/>
    <property type="project" value="UniProtKB-UniRule"/>
</dbReference>
<dbReference type="FunFam" id="3.10.310.10:FF:000004">
    <property type="entry name" value="Diaminopimelate epimerase"/>
    <property type="match status" value="1"/>
</dbReference>
<dbReference type="Gene3D" id="3.10.310.10">
    <property type="entry name" value="Diaminopimelate Epimerase, Chain A, domain 1"/>
    <property type="match status" value="2"/>
</dbReference>
<dbReference type="HAMAP" id="MF_00197">
    <property type="entry name" value="DAP_epimerase"/>
    <property type="match status" value="1"/>
</dbReference>
<dbReference type="InterPro" id="IPR018510">
    <property type="entry name" value="DAP_epimerase_AS"/>
</dbReference>
<dbReference type="InterPro" id="IPR001653">
    <property type="entry name" value="DAP_epimerase_DapF"/>
</dbReference>
<dbReference type="NCBIfam" id="TIGR00652">
    <property type="entry name" value="DapF"/>
    <property type="match status" value="1"/>
</dbReference>
<dbReference type="PANTHER" id="PTHR31689:SF0">
    <property type="entry name" value="DIAMINOPIMELATE EPIMERASE"/>
    <property type="match status" value="1"/>
</dbReference>
<dbReference type="PANTHER" id="PTHR31689">
    <property type="entry name" value="DIAMINOPIMELATE EPIMERASE, CHLOROPLASTIC"/>
    <property type="match status" value="1"/>
</dbReference>
<dbReference type="Pfam" id="PF01678">
    <property type="entry name" value="DAP_epimerase"/>
    <property type="match status" value="2"/>
</dbReference>
<dbReference type="SUPFAM" id="SSF54506">
    <property type="entry name" value="Diaminopimelate epimerase-like"/>
    <property type="match status" value="2"/>
</dbReference>
<dbReference type="PROSITE" id="PS01326">
    <property type="entry name" value="DAP_EPIMERASE"/>
    <property type="match status" value="1"/>
</dbReference>
<organism>
    <name type="scientific">Rhodopseudomonas palustris (strain BisA53)</name>
    <dbReference type="NCBI Taxonomy" id="316055"/>
    <lineage>
        <taxon>Bacteria</taxon>
        <taxon>Pseudomonadati</taxon>
        <taxon>Pseudomonadota</taxon>
        <taxon>Alphaproteobacteria</taxon>
        <taxon>Hyphomicrobiales</taxon>
        <taxon>Nitrobacteraceae</taxon>
        <taxon>Rhodopseudomonas</taxon>
    </lineage>
</organism>
<keyword id="KW-0028">Amino-acid biosynthesis</keyword>
<keyword id="KW-0963">Cytoplasm</keyword>
<keyword id="KW-0413">Isomerase</keyword>
<keyword id="KW-0457">Lysine biosynthesis</keyword>
<protein>
    <recommendedName>
        <fullName evidence="1">Diaminopimelate epimerase</fullName>
        <shortName evidence="1">DAP epimerase</shortName>
        <ecNumber evidence="1">5.1.1.7</ecNumber>
    </recommendedName>
    <alternativeName>
        <fullName evidence="1">PLP-independent amino acid racemase</fullName>
    </alternativeName>
</protein>